<gene>
    <name evidence="1" type="primary">rnpA</name>
    <name type="ordered locus">MAV_5312</name>
</gene>
<protein>
    <recommendedName>
        <fullName evidence="1">Ribonuclease P protein component</fullName>
        <shortName evidence="1">RNase P protein</shortName>
        <shortName evidence="1">RNaseP protein</shortName>
        <ecNumber evidence="1">3.1.26.5</ecNumber>
    </recommendedName>
    <alternativeName>
        <fullName evidence="1">Protein C5</fullName>
    </alternativeName>
</protein>
<feature type="chain" id="PRO_1000021427" description="Ribonuclease P protein component">
    <location>
        <begin position="1"/>
        <end position="119"/>
    </location>
</feature>
<accession>A0QND4</accession>
<organism>
    <name type="scientific">Mycobacterium avium (strain 104)</name>
    <dbReference type="NCBI Taxonomy" id="243243"/>
    <lineage>
        <taxon>Bacteria</taxon>
        <taxon>Bacillati</taxon>
        <taxon>Actinomycetota</taxon>
        <taxon>Actinomycetes</taxon>
        <taxon>Mycobacteriales</taxon>
        <taxon>Mycobacteriaceae</taxon>
        <taxon>Mycobacterium</taxon>
        <taxon>Mycobacterium avium complex (MAC)</taxon>
    </lineage>
</organism>
<sequence>MLPARNRMTRSTEFDATVKHGTRMAQPDIVVHLRRDSEPDDESAGPRVGLVVGKAVGTAVQRHRVARRLRHVARALLGELEPSDRLVIRALPGSRTASSARLAQELQRCLRRMPAGTGP</sequence>
<proteinExistence type="inferred from homology"/>
<evidence type="ECO:0000255" key="1">
    <source>
        <dbReference type="HAMAP-Rule" id="MF_00227"/>
    </source>
</evidence>
<reference key="1">
    <citation type="submission" date="2006-10" db="EMBL/GenBank/DDBJ databases">
        <authorList>
            <person name="Fleischmann R.D."/>
            <person name="Dodson R.J."/>
            <person name="Haft D.H."/>
            <person name="Merkel J.S."/>
            <person name="Nelson W.C."/>
            <person name="Fraser C.M."/>
        </authorList>
    </citation>
    <scope>NUCLEOTIDE SEQUENCE [LARGE SCALE GENOMIC DNA]</scope>
    <source>
        <strain>104</strain>
    </source>
</reference>
<comment type="function">
    <text evidence="1">RNaseP catalyzes the removal of the 5'-leader sequence from pre-tRNA to produce the mature 5'-terminus. It can also cleave other RNA substrates such as 4.5S RNA. The protein component plays an auxiliary but essential role in vivo by binding to the 5'-leader sequence and broadening the substrate specificity of the ribozyme.</text>
</comment>
<comment type="catalytic activity">
    <reaction evidence="1">
        <text>Endonucleolytic cleavage of RNA, removing 5'-extranucleotides from tRNA precursor.</text>
        <dbReference type="EC" id="3.1.26.5"/>
    </reaction>
</comment>
<comment type="subunit">
    <text evidence="1">Consists of a catalytic RNA component (M1 or rnpB) and a protein subunit.</text>
</comment>
<comment type="similarity">
    <text evidence="1">Belongs to the RnpA family.</text>
</comment>
<dbReference type="EC" id="3.1.26.5" evidence="1"/>
<dbReference type="EMBL" id="CP000479">
    <property type="protein sequence ID" value="ABK64826.1"/>
    <property type="molecule type" value="Genomic_DNA"/>
</dbReference>
<dbReference type="RefSeq" id="WP_009979989.1">
    <property type="nucleotide sequence ID" value="NC_008595.1"/>
</dbReference>
<dbReference type="SMR" id="A0QND4"/>
<dbReference type="KEGG" id="mav:MAV_5312"/>
<dbReference type="HOGENOM" id="CLU_117179_4_1_11"/>
<dbReference type="Proteomes" id="UP000001574">
    <property type="component" value="Chromosome"/>
</dbReference>
<dbReference type="GO" id="GO:0030677">
    <property type="term" value="C:ribonuclease P complex"/>
    <property type="evidence" value="ECO:0007669"/>
    <property type="project" value="TreeGrafter"/>
</dbReference>
<dbReference type="GO" id="GO:0042781">
    <property type="term" value="F:3'-tRNA processing endoribonuclease activity"/>
    <property type="evidence" value="ECO:0007669"/>
    <property type="project" value="TreeGrafter"/>
</dbReference>
<dbReference type="GO" id="GO:0004526">
    <property type="term" value="F:ribonuclease P activity"/>
    <property type="evidence" value="ECO:0007669"/>
    <property type="project" value="UniProtKB-UniRule"/>
</dbReference>
<dbReference type="GO" id="GO:0000049">
    <property type="term" value="F:tRNA binding"/>
    <property type="evidence" value="ECO:0007669"/>
    <property type="project" value="UniProtKB-UniRule"/>
</dbReference>
<dbReference type="GO" id="GO:0001682">
    <property type="term" value="P:tRNA 5'-leader removal"/>
    <property type="evidence" value="ECO:0007669"/>
    <property type="project" value="UniProtKB-UniRule"/>
</dbReference>
<dbReference type="Gene3D" id="3.30.230.10">
    <property type="match status" value="1"/>
</dbReference>
<dbReference type="HAMAP" id="MF_00227">
    <property type="entry name" value="RNase_P"/>
    <property type="match status" value="1"/>
</dbReference>
<dbReference type="InterPro" id="IPR020568">
    <property type="entry name" value="Ribosomal_Su5_D2-typ_SF"/>
</dbReference>
<dbReference type="InterPro" id="IPR014721">
    <property type="entry name" value="Ribsml_uS5_D2-typ_fold_subgr"/>
</dbReference>
<dbReference type="InterPro" id="IPR000100">
    <property type="entry name" value="RNase_P"/>
</dbReference>
<dbReference type="InterPro" id="IPR020539">
    <property type="entry name" value="RNase_P_CS"/>
</dbReference>
<dbReference type="NCBIfam" id="TIGR00188">
    <property type="entry name" value="rnpA"/>
    <property type="match status" value="1"/>
</dbReference>
<dbReference type="PANTHER" id="PTHR33992">
    <property type="entry name" value="RIBONUCLEASE P PROTEIN COMPONENT"/>
    <property type="match status" value="1"/>
</dbReference>
<dbReference type="PANTHER" id="PTHR33992:SF1">
    <property type="entry name" value="RIBONUCLEASE P PROTEIN COMPONENT"/>
    <property type="match status" value="1"/>
</dbReference>
<dbReference type="Pfam" id="PF00825">
    <property type="entry name" value="Ribonuclease_P"/>
    <property type="match status" value="1"/>
</dbReference>
<dbReference type="SUPFAM" id="SSF54211">
    <property type="entry name" value="Ribosomal protein S5 domain 2-like"/>
    <property type="match status" value="1"/>
</dbReference>
<dbReference type="PROSITE" id="PS00648">
    <property type="entry name" value="RIBONUCLEASE_P"/>
    <property type="match status" value="1"/>
</dbReference>
<keyword id="KW-0255">Endonuclease</keyword>
<keyword id="KW-0378">Hydrolase</keyword>
<keyword id="KW-0540">Nuclease</keyword>
<keyword id="KW-0694">RNA-binding</keyword>
<keyword id="KW-0819">tRNA processing</keyword>
<name>RNPA_MYCA1</name>